<proteinExistence type="inferred from homology"/>
<gene>
    <name evidence="1" type="primary">tusA</name>
    <name type="ordered locus">IL0009</name>
</gene>
<feature type="chain" id="PRO_0000159040" description="Sulfur carrier protein TusA">
    <location>
        <begin position="1"/>
        <end position="79"/>
    </location>
</feature>
<feature type="active site" description="Cysteine persulfide intermediate" evidence="1">
    <location>
        <position position="17"/>
    </location>
</feature>
<accession>Q5QXH9</accession>
<keyword id="KW-0963">Cytoplasm</keyword>
<keyword id="KW-1185">Reference proteome</keyword>
<comment type="function">
    <text evidence="1">Sulfur carrier protein which probably makes part of a sulfur-relay system.</text>
</comment>
<comment type="subcellular location">
    <subcellularLocation>
        <location evidence="1">Cytoplasm</location>
    </subcellularLocation>
</comment>
<comment type="similarity">
    <text evidence="1">Belongs to the sulfur carrier protein TusA family.</text>
</comment>
<protein>
    <recommendedName>
        <fullName evidence="1">Sulfur carrier protein TusA</fullName>
    </recommendedName>
</protein>
<name>TUSA_IDILO</name>
<evidence type="ECO:0000255" key="1">
    <source>
        <dbReference type="HAMAP-Rule" id="MF_00413"/>
    </source>
</evidence>
<dbReference type="EMBL" id="AE017340">
    <property type="protein sequence ID" value="AAV80853.1"/>
    <property type="molecule type" value="Genomic_DNA"/>
</dbReference>
<dbReference type="RefSeq" id="WP_011233273.1">
    <property type="nucleotide sequence ID" value="NC_006512.1"/>
</dbReference>
<dbReference type="SMR" id="Q5QXH9"/>
<dbReference type="STRING" id="283942.IL0009"/>
<dbReference type="GeneID" id="41335157"/>
<dbReference type="KEGG" id="ilo:IL0009"/>
<dbReference type="eggNOG" id="COG0425">
    <property type="taxonomic scope" value="Bacteria"/>
</dbReference>
<dbReference type="HOGENOM" id="CLU_165255_5_1_6"/>
<dbReference type="OrthoDB" id="9797352at2"/>
<dbReference type="Proteomes" id="UP000001171">
    <property type="component" value="Chromosome"/>
</dbReference>
<dbReference type="GO" id="GO:0005737">
    <property type="term" value="C:cytoplasm"/>
    <property type="evidence" value="ECO:0007669"/>
    <property type="project" value="UniProtKB-SubCell"/>
</dbReference>
<dbReference type="GO" id="GO:0097163">
    <property type="term" value="F:sulfur carrier activity"/>
    <property type="evidence" value="ECO:0007669"/>
    <property type="project" value="UniProtKB-UniRule"/>
</dbReference>
<dbReference type="GO" id="GO:0002143">
    <property type="term" value="P:tRNA wobble position uridine thiolation"/>
    <property type="evidence" value="ECO:0007669"/>
    <property type="project" value="InterPro"/>
</dbReference>
<dbReference type="CDD" id="cd03423">
    <property type="entry name" value="SirA"/>
    <property type="match status" value="1"/>
</dbReference>
<dbReference type="Gene3D" id="3.30.110.40">
    <property type="entry name" value="TusA-like domain"/>
    <property type="match status" value="1"/>
</dbReference>
<dbReference type="HAMAP" id="MF_00413">
    <property type="entry name" value="Thiourid_synth_A"/>
    <property type="match status" value="1"/>
</dbReference>
<dbReference type="InterPro" id="IPR022931">
    <property type="entry name" value="Sulphur_carrier_TusA"/>
</dbReference>
<dbReference type="InterPro" id="IPR001455">
    <property type="entry name" value="TusA-like"/>
</dbReference>
<dbReference type="InterPro" id="IPR036868">
    <property type="entry name" value="TusA-like_sf"/>
</dbReference>
<dbReference type="NCBIfam" id="NF001423">
    <property type="entry name" value="PRK00299.1"/>
    <property type="match status" value="1"/>
</dbReference>
<dbReference type="PANTHER" id="PTHR33279:SF2">
    <property type="entry name" value="SULFUR CARRIER PROTEIN TUSA"/>
    <property type="match status" value="1"/>
</dbReference>
<dbReference type="PANTHER" id="PTHR33279">
    <property type="entry name" value="SULFUR CARRIER PROTEIN YEDF-RELATED"/>
    <property type="match status" value="1"/>
</dbReference>
<dbReference type="Pfam" id="PF01206">
    <property type="entry name" value="TusA"/>
    <property type="match status" value="1"/>
</dbReference>
<dbReference type="SUPFAM" id="SSF64307">
    <property type="entry name" value="SirA-like"/>
    <property type="match status" value="1"/>
</dbReference>
<dbReference type="PROSITE" id="PS01148">
    <property type="entry name" value="UPF0033"/>
    <property type="match status" value="1"/>
</dbReference>
<sequence>MTQINCDKELDTLGLKCPEPVMLVRAAIRKMDVGQVLLIIADDPATTRDIPGFCEFMEHELVGSETEEIPYRYWVRKSH</sequence>
<organism>
    <name type="scientific">Idiomarina loihiensis (strain ATCC BAA-735 / DSM 15497 / L2-TR)</name>
    <dbReference type="NCBI Taxonomy" id="283942"/>
    <lineage>
        <taxon>Bacteria</taxon>
        <taxon>Pseudomonadati</taxon>
        <taxon>Pseudomonadota</taxon>
        <taxon>Gammaproteobacteria</taxon>
        <taxon>Alteromonadales</taxon>
        <taxon>Idiomarinaceae</taxon>
        <taxon>Idiomarina</taxon>
    </lineage>
</organism>
<reference key="1">
    <citation type="journal article" date="2004" name="Proc. Natl. Acad. Sci. U.S.A.">
        <title>Genome sequence of the deep-sea gamma-proteobacterium Idiomarina loihiensis reveals amino acid fermentation as a source of carbon and energy.</title>
        <authorList>
            <person name="Hou S."/>
            <person name="Saw J.H."/>
            <person name="Lee K.S."/>
            <person name="Freitas T.A."/>
            <person name="Belisle C."/>
            <person name="Kawarabayasi Y."/>
            <person name="Donachie S.P."/>
            <person name="Pikina A."/>
            <person name="Galperin M.Y."/>
            <person name="Koonin E.V."/>
            <person name="Makarova K.S."/>
            <person name="Omelchenko M.V."/>
            <person name="Sorokin A."/>
            <person name="Wolf Y.I."/>
            <person name="Li Q.X."/>
            <person name="Keum Y.S."/>
            <person name="Campbell S."/>
            <person name="Denery J."/>
            <person name="Aizawa S."/>
            <person name="Shibata S."/>
            <person name="Malahoff A."/>
            <person name="Alam M."/>
        </authorList>
    </citation>
    <scope>NUCLEOTIDE SEQUENCE [LARGE SCALE GENOMIC DNA]</scope>
    <source>
        <strain>ATCC BAA-735 / DSM 15497 / L2-TR</strain>
    </source>
</reference>